<evidence type="ECO:0000255" key="1">
    <source>
        <dbReference type="HAMAP-Rule" id="MF_00244"/>
    </source>
</evidence>
<evidence type="ECO:0000305" key="2"/>
<name>NADD_AGRFC</name>
<feature type="chain" id="PRO_0000181376" description="Probable nicotinate-nucleotide adenylyltransferase">
    <location>
        <begin position="1"/>
        <end position="187"/>
    </location>
</feature>
<protein>
    <recommendedName>
        <fullName evidence="1">Probable nicotinate-nucleotide adenylyltransferase</fullName>
        <ecNumber evidence="1">2.7.7.18</ecNumber>
    </recommendedName>
    <alternativeName>
        <fullName evidence="1">Deamido-NAD(+) diphosphorylase</fullName>
    </alternativeName>
    <alternativeName>
        <fullName evidence="1">Deamido-NAD(+) pyrophosphorylase</fullName>
    </alternativeName>
    <alternativeName>
        <fullName evidence="1">Nicotinate mononucleotide adenylyltransferase</fullName>
        <shortName evidence="1">NaMN adenylyltransferase</shortName>
    </alternativeName>
</protein>
<dbReference type="EC" id="2.7.7.18" evidence="1"/>
<dbReference type="EMBL" id="AE007869">
    <property type="protein sequence ID" value="AAK88493.2"/>
    <property type="status" value="ALT_INIT"/>
    <property type="molecule type" value="Genomic_DNA"/>
</dbReference>
<dbReference type="PIR" id="AI2917">
    <property type="entry name" value="AI2917"/>
</dbReference>
<dbReference type="PIR" id="D97692">
    <property type="entry name" value="D97692"/>
</dbReference>
<dbReference type="RefSeq" id="NP_355708.2">
    <property type="nucleotide sequence ID" value="NC_003062.2"/>
</dbReference>
<dbReference type="SMR" id="Q8UBS2"/>
<dbReference type="STRING" id="176299.Atu2778"/>
<dbReference type="EnsemblBacteria" id="AAK88493">
    <property type="protein sequence ID" value="AAK88493"/>
    <property type="gene ID" value="Atu2778"/>
</dbReference>
<dbReference type="KEGG" id="atu:Atu2778"/>
<dbReference type="PATRIC" id="fig|176299.10.peg.2788"/>
<dbReference type="eggNOG" id="COG1057">
    <property type="taxonomic scope" value="Bacteria"/>
</dbReference>
<dbReference type="HOGENOM" id="CLU_069765_2_0_5"/>
<dbReference type="OrthoDB" id="5295945at2"/>
<dbReference type="UniPathway" id="UPA00253">
    <property type="reaction ID" value="UER00332"/>
</dbReference>
<dbReference type="Proteomes" id="UP000000813">
    <property type="component" value="Chromosome circular"/>
</dbReference>
<dbReference type="GO" id="GO:0005524">
    <property type="term" value="F:ATP binding"/>
    <property type="evidence" value="ECO:0007669"/>
    <property type="project" value="UniProtKB-KW"/>
</dbReference>
<dbReference type="GO" id="GO:0004515">
    <property type="term" value="F:nicotinate-nucleotide adenylyltransferase activity"/>
    <property type="evidence" value="ECO:0007669"/>
    <property type="project" value="UniProtKB-UniRule"/>
</dbReference>
<dbReference type="GO" id="GO:0009435">
    <property type="term" value="P:NAD biosynthetic process"/>
    <property type="evidence" value="ECO:0007669"/>
    <property type="project" value="UniProtKB-UniRule"/>
</dbReference>
<dbReference type="CDD" id="cd02165">
    <property type="entry name" value="NMNAT"/>
    <property type="match status" value="1"/>
</dbReference>
<dbReference type="Gene3D" id="3.40.50.620">
    <property type="entry name" value="HUPs"/>
    <property type="match status" value="1"/>
</dbReference>
<dbReference type="HAMAP" id="MF_00244">
    <property type="entry name" value="NaMN_adenylyltr"/>
    <property type="match status" value="1"/>
</dbReference>
<dbReference type="InterPro" id="IPR004821">
    <property type="entry name" value="Cyt_trans-like"/>
</dbReference>
<dbReference type="InterPro" id="IPR005248">
    <property type="entry name" value="NadD/NMNAT"/>
</dbReference>
<dbReference type="InterPro" id="IPR014729">
    <property type="entry name" value="Rossmann-like_a/b/a_fold"/>
</dbReference>
<dbReference type="NCBIfam" id="TIGR00482">
    <property type="entry name" value="nicotinate (nicotinamide) nucleotide adenylyltransferase"/>
    <property type="match status" value="1"/>
</dbReference>
<dbReference type="NCBIfam" id="NF000843">
    <property type="entry name" value="PRK00071.2-2"/>
    <property type="match status" value="1"/>
</dbReference>
<dbReference type="NCBIfam" id="NF000845">
    <property type="entry name" value="PRK00071.2-4"/>
    <property type="match status" value="1"/>
</dbReference>
<dbReference type="PANTHER" id="PTHR39321">
    <property type="entry name" value="NICOTINATE-NUCLEOTIDE ADENYLYLTRANSFERASE-RELATED"/>
    <property type="match status" value="1"/>
</dbReference>
<dbReference type="PANTHER" id="PTHR39321:SF3">
    <property type="entry name" value="PHOSPHOPANTETHEINE ADENYLYLTRANSFERASE"/>
    <property type="match status" value="1"/>
</dbReference>
<dbReference type="Pfam" id="PF01467">
    <property type="entry name" value="CTP_transf_like"/>
    <property type="match status" value="1"/>
</dbReference>
<dbReference type="SUPFAM" id="SSF52374">
    <property type="entry name" value="Nucleotidylyl transferase"/>
    <property type="match status" value="1"/>
</dbReference>
<organism>
    <name type="scientific">Agrobacterium fabrum (strain C58 / ATCC 33970)</name>
    <name type="common">Agrobacterium tumefaciens (strain C58)</name>
    <dbReference type="NCBI Taxonomy" id="176299"/>
    <lineage>
        <taxon>Bacteria</taxon>
        <taxon>Pseudomonadati</taxon>
        <taxon>Pseudomonadota</taxon>
        <taxon>Alphaproteobacteria</taxon>
        <taxon>Hyphomicrobiales</taxon>
        <taxon>Rhizobiaceae</taxon>
        <taxon>Rhizobium/Agrobacterium group</taxon>
        <taxon>Agrobacterium</taxon>
        <taxon>Agrobacterium tumefaciens complex</taxon>
    </lineage>
</organism>
<gene>
    <name evidence="1" type="primary">nadD</name>
    <name type="ordered locus">Atu2778</name>
    <name type="ORF">AGR_C_5040</name>
</gene>
<reference key="1">
    <citation type="journal article" date="2001" name="Science">
        <title>The genome of the natural genetic engineer Agrobacterium tumefaciens C58.</title>
        <authorList>
            <person name="Wood D.W."/>
            <person name="Setubal J.C."/>
            <person name="Kaul R."/>
            <person name="Monks D.E."/>
            <person name="Kitajima J.P."/>
            <person name="Okura V.K."/>
            <person name="Zhou Y."/>
            <person name="Chen L."/>
            <person name="Wood G.E."/>
            <person name="Almeida N.F. Jr."/>
            <person name="Woo L."/>
            <person name="Chen Y."/>
            <person name="Paulsen I.T."/>
            <person name="Eisen J.A."/>
            <person name="Karp P.D."/>
            <person name="Bovee D. Sr."/>
            <person name="Chapman P."/>
            <person name="Clendenning J."/>
            <person name="Deatherage G."/>
            <person name="Gillet W."/>
            <person name="Grant C."/>
            <person name="Kutyavin T."/>
            <person name="Levy R."/>
            <person name="Li M.-J."/>
            <person name="McClelland E."/>
            <person name="Palmieri A."/>
            <person name="Raymond C."/>
            <person name="Rouse G."/>
            <person name="Saenphimmachak C."/>
            <person name="Wu Z."/>
            <person name="Romero P."/>
            <person name="Gordon D."/>
            <person name="Zhang S."/>
            <person name="Yoo H."/>
            <person name="Tao Y."/>
            <person name="Biddle P."/>
            <person name="Jung M."/>
            <person name="Krespan W."/>
            <person name="Perry M."/>
            <person name="Gordon-Kamm B."/>
            <person name="Liao L."/>
            <person name="Kim S."/>
            <person name="Hendrick C."/>
            <person name="Zhao Z.-Y."/>
            <person name="Dolan M."/>
            <person name="Chumley F."/>
            <person name="Tingey S.V."/>
            <person name="Tomb J.-F."/>
            <person name="Gordon M.P."/>
            <person name="Olson M.V."/>
            <person name="Nester E.W."/>
        </authorList>
    </citation>
    <scope>NUCLEOTIDE SEQUENCE [LARGE SCALE GENOMIC DNA]</scope>
    <source>
        <strain>C58 / ATCC 33970</strain>
    </source>
</reference>
<reference key="2">
    <citation type="journal article" date="2001" name="Science">
        <title>Genome sequence of the plant pathogen and biotechnology agent Agrobacterium tumefaciens C58.</title>
        <authorList>
            <person name="Goodner B."/>
            <person name="Hinkle G."/>
            <person name="Gattung S."/>
            <person name="Miller N."/>
            <person name="Blanchard M."/>
            <person name="Qurollo B."/>
            <person name="Goldman B.S."/>
            <person name="Cao Y."/>
            <person name="Askenazi M."/>
            <person name="Halling C."/>
            <person name="Mullin L."/>
            <person name="Houmiel K."/>
            <person name="Gordon J."/>
            <person name="Vaudin M."/>
            <person name="Iartchouk O."/>
            <person name="Epp A."/>
            <person name="Liu F."/>
            <person name="Wollam C."/>
            <person name="Allinger M."/>
            <person name="Doughty D."/>
            <person name="Scott C."/>
            <person name="Lappas C."/>
            <person name="Markelz B."/>
            <person name="Flanagan C."/>
            <person name="Crowell C."/>
            <person name="Gurson J."/>
            <person name="Lomo C."/>
            <person name="Sear C."/>
            <person name="Strub G."/>
            <person name="Cielo C."/>
            <person name="Slater S."/>
        </authorList>
    </citation>
    <scope>NUCLEOTIDE SEQUENCE [LARGE SCALE GENOMIC DNA]</scope>
    <source>
        <strain>C58 / ATCC 33970</strain>
    </source>
</reference>
<sequence>MVVGLFGGSFNPPHAGHALVAEIALRRLGLDQLWWMVTPGNPLKSRSELASLEDRIAACERLVSDPRIKVTAFEKSLGISYTANTLAKVKAKNPHVRFIWIMGADNLKSFHRWQKWREIAETFPIAVIDRPGSTLSYLSSTMAQAFSQARIDEDDAGVLWKKKAPAWVFIHGPRSTLSSTALRNNHK</sequence>
<accession>Q8UBS2</accession>
<keyword id="KW-0067">ATP-binding</keyword>
<keyword id="KW-0520">NAD</keyword>
<keyword id="KW-0547">Nucleotide-binding</keyword>
<keyword id="KW-0548">Nucleotidyltransferase</keyword>
<keyword id="KW-0662">Pyridine nucleotide biosynthesis</keyword>
<keyword id="KW-1185">Reference proteome</keyword>
<keyword id="KW-0808">Transferase</keyword>
<comment type="function">
    <text evidence="1">Catalyzes the reversible adenylation of nicotinate mononucleotide (NaMN) to nicotinic acid adenine dinucleotide (NaAD).</text>
</comment>
<comment type="catalytic activity">
    <reaction evidence="1">
        <text>nicotinate beta-D-ribonucleotide + ATP + H(+) = deamido-NAD(+) + diphosphate</text>
        <dbReference type="Rhea" id="RHEA:22860"/>
        <dbReference type="ChEBI" id="CHEBI:15378"/>
        <dbReference type="ChEBI" id="CHEBI:30616"/>
        <dbReference type="ChEBI" id="CHEBI:33019"/>
        <dbReference type="ChEBI" id="CHEBI:57502"/>
        <dbReference type="ChEBI" id="CHEBI:58437"/>
        <dbReference type="EC" id="2.7.7.18"/>
    </reaction>
</comment>
<comment type="pathway">
    <text evidence="1">Cofactor biosynthesis; NAD(+) biosynthesis; deamido-NAD(+) from nicotinate D-ribonucleotide: step 1/1.</text>
</comment>
<comment type="similarity">
    <text evidence="1">Belongs to the NadD family.</text>
</comment>
<comment type="sequence caution" evidence="2">
    <conflict type="erroneous initiation">
        <sequence resource="EMBL-CDS" id="AAK88493"/>
    </conflict>
</comment>
<proteinExistence type="inferred from homology"/>